<sequence>MALTKAEMAEHLFETLGMNKRVAKEMVESFFEEIRGALESGEQVKLSGFGNFDLRDKNQRPGRNPKTGEDIPISARRVVTFRPGQKLKTRVEAANTGK</sequence>
<keyword id="KW-0233">DNA recombination</keyword>
<keyword id="KW-0238">DNA-binding</keyword>
<keyword id="KW-0804">Transcription</keyword>
<keyword id="KW-0805">Transcription regulation</keyword>
<keyword id="KW-0810">Translation regulation</keyword>
<feature type="chain" id="PRO_1000060569" description="Integration host factor subunit alpha">
    <location>
        <begin position="1"/>
        <end position="98"/>
    </location>
</feature>
<feature type="region of interest" description="Disordered" evidence="2">
    <location>
        <begin position="49"/>
        <end position="70"/>
    </location>
</feature>
<reference key="1">
    <citation type="submission" date="2007-07" db="EMBL/GenBank/DDBJ databases">
        <title>Complete sequence of chromosome of Shewanella baltica OS185.</title>
        <authorList>
            <consortium name="US DOE Joint Genome Institute"/>
            <person name="Copeland A."/>
            <person name="Lucas S."/>
            <person name="Lapidus A."/>
            <person name="Barry K."/>
            <person name="Glavina del Rio T."/>
            <person name="Dalin E."/>
            <person name="Tice H."/>
            <person name="Pitluck S."/>
            <person name="Sims D."/>
            <person name="Brettin T."/>
            <person name="Bruce D."/>
            <person name="Detter J.C."/>
            <person name="Han C."/>
            <person name="Schmutz J."/>
            <person name="Larimer F."/>
            <person name="Land M."/>
            <person name="Hauser L."/>
            <person name="Kyrpides N."/>
            <person name="Mikhailova N."/>
            <person name="Brettar I."/>
            <person name="Rodrigues J."/>
            <person name="Konstantinidis K."/>
            <person name="Tiedje J."/>
            <person name="Richardson P."/>
        </authorList>
    </citation>
    <scope>NUCLEOTIDE SEQUENCE [LARGE SCALE GENOMIC DNA]</scope>
    <source>
        <strain>OS185</strain>
    </source>
</reference>
<comment type="function">
    <text evidence="1">This protein is one of the two subunits of integration host factor, a specific DNA-binding protein that functions in genetic recombination as well as in transcriptional and translational control.</text>
</comment>
<comment type="subunit">
    <text evidence="1">Heterodimer of an alpha and a beta chain.</text>
</comment>
<comment type="similarity">
    <text evidence="1">Belongs to the bacterial histone-like protein family.</text>
</comment>
<evidence type="ECO:0000255" key="1">
    <source>
        <dbReference type="HAMAP-Rule" id="MF_00380"/>
    </source>
</evidence>
<evidence type="ECO:0000256" key="2">
    <source>
        <dbReference type="SAM" id="MobiDB-lite"/>
    </source>
</evidence>
<dbReference type="EMBL" id="CP000753">
    <property type="protein sequence ID" value="ABS08045.1"/>
    <property type="molecule type" value="Genomic_DNA"/>
</dbReference>
<dbReference type="RefSeq" id="WP_006081370.1">
    <property type="nucleotide sequence ID" value="NC_009665.1"/>
</dbReference>
<dbReference type="SMR" id="A6WMK6"/>
<dbReference type="GeneID" id="67443386"/>
<dbReference type="KEGG" id="sbm:Shew185_1902"/>
<dbReference type="HOGENOM" id="CLU_105066_1_3_6"/>
<dbReference type="GO" id="GO:0005829">
    <property type="term" value="C:cytosol"/>
    <property type="evidence" value="ECO:0007669"/>
    <property type="project" value="TreeGrafter"/>
</dbReference>
<dbReference type="GO" id="GO:0003677">
    <property type="term" value="F:DNA binding"/>
    <property type="evidence" value="ECO:0007669"/>
    <property type="project" value="UniProtKB-UniRule"/>
</dbReference>
<dbReference type="GO" id="GO:0030527">
    <property type="term" value="F:structural constituent of chromatin"/>
    <property type="evidence" value="ECO:0007669"/>
    <property type="project" value="InterPro"/>
</dbReference>
<dbReference type="GO" id="GO:0006310">
    <property type="term" value="P:DNA recombination"/>
    <property type="evidence" value="ECO:0007669"/>
    <property type="project" value="UniProtKB-UniRule"/>
</dbReference>
<dbReference type="GO" id="GO:0009893">
    <property type="term" value="P:positive regulation of metabolic process"/>
    <property type="evidence" value="ECO:0007669"/>
    <property type="project" value="UniProtKB-ARBA"/>
</dbReference>
<dbReference type="GO" id="GO:0006355">
    <property type="term" value="P:regulation of DNA-templated transcription"/>
    <property type="evidence" value="ECO:0007669"/>
    <property type="project" value="UniProtKB-UniRule"/>
</dbReference>
<dbReference type="GO" id="GO:0006417">
    <property type="term" value="P:regulation of translation"/>
    <property type="evidence" value="ECO:0007669"/>
    <property type="project" value="UniProtKB-UniRule"/>
</dbReference>
<dbReference type="CDD" id="cd13835">
    <property type="entry name" value="IHF_A"/>
    <property type="match status" value="1"/>
</dbReference>
<dbReference type="FunFam" id="4.10.520.10:FF:000002">
    <property type="entry name" value="Integration host factor subunit alpha"/>
    <property type="match status" value="1"/>
</dbReference>
<dbReference type="Gene3D" id="4.10.520.10">
    <property type="entry name" value="IHF-like DNA-binding proteins"/>
    <property type="match status" value="1"/>
</dbReference>
<dbReference type="HAMAP" id="MF_00380">
    <property type="entry name" value="IHF_alpha"/>
    <property type="match status" value="1"/>
</dbReference>
<dbReference type="InterPro" id="IPR000119">
    <property type="entry name" value="Hist_DNA-bd"/>
</dbReference>
<dbReference type="InterPro" id="IPR020816">
    <property type="entry name" value="Histone-like_DNA-bd_CS"/>
</dbReference>
<dbReference type="InterPro" id="IPR010992">
    <property type="entry name" value="IHF-like_DNA-bd_dom_sf"/>
</dbReference>
<dbReference type="InterPro" id="IPR005684">
    <property type="entry name" value="IHF_alpha"/>
</dbReference>
<dbReference type="NCBIfam" id="TIGR00987">
    <property type="entry name" value="himA"/>
    <property type="match status" value="1"/>
</dbReference>
<dbReference type="NCBIfam" id="NF001401">
    <property type="entry name" value="PRK00285.1"/>
    <property type="match status" value="1"/>
</dbReference>
<dbReference type="PANTHER" id="PTHR33175">
    <property type="entry name" value="DNA-BINDING PROTEIN HU"/>
    <property type="match status" value="1"/>
</dbReference>
<dbReference type="PANTHER" id="PTHR33175:SF2">
    <property type="entry name" value="INTEGRATION HOST FACTOR SUBUNIT ALPHA"/>
    <property type="match status" value="1"/>
</dbReference>
<dbReference type="Pfam" id="PF00216">
    <property type="entry name" value="Bac_DNA_binding"/>
    <property type="match status" value="1"/>
</dbReference>
<dbReference type="PRINTS" id="PR01727">
    <property type="entry name" value="DNABINDINGHU"/>
</dbReference>
<dbReference type="SMART" id="SM00411">
    <property type="entry name" value="BHL"/>
    <property type="match status" value="1"/>
</dbReference>
<dbReference type="SUPFAM" id="SSF47729">
    <property type="entry name" value="IHF-like DNA-binding proteins"/>
    <property type="match status" value="1"/>
</dbReference>
<dbReference type="PROSITE" id="PS00045">
    <property type="entry name" value="HISTONE_LIKE"/>
    <property type="match status" value="1"/>
</dbReference>
<protein>
    <recommendedName>
        <fullName evidence="1">Integration host factor subunit alpha</fullName>
        <shortName evidence="1">IHF-alpha</shortName>
    </recommendedName>
</protein>
<name>IHFA_SHEB8</name>
<proteinExistence type="inferred from homology"/>
<gene>
    <name evidence="1" type="primary">ihfA</name>
    <name evidence="1" type="synonym">himA</name>
    <name type="ordered locus">Shew185_1902</name>
</gene>
<accession>A6WMK6</accession>
<organism>
    <name type="scientific">Shewanella baltica (strain OS185)</name>
    <dbReference type="NCBI Taxonomy" id="402882"/>
    <lineage>
        <taxon>Bacteria</taxon>
        <taxon>Pseudomonadati</taxon>
        <taxon>Pseudomonadota</taxon>
        <taxon>Gammaproteobacteria</taxon>
        <taxon>Alteromonadales</taxon>
        <taxon>Shewanellaceae</taxon>
        <taxon>Shewanella</taxon>
    </lineage>
</organism>